<protein>
    <recommendedName>
        <fullName evidence="1">Large ribosomal subunit protein bL9</fullName>
    </recommendedName>
    <alternativeName>
        <fullName evidence="2">50S ribosomal protein L9</fullName>
    </alternativeName>
</protein>
<gene>
    <name evidence="1" type="primary">rplI</name>
    <name type="ordered locus">PBPRA3336</name>
</gene>
<organism>
    <name type="scientific">Photobacterium profundum (strain SS9)</name>
    <dbReference type="NCBI Taxonomy" id="298386"/>
    <lineage>
        <taxon>Bacteria</taxon>
        <taxon>Pseudomonadati</taxon>
        <taxon>Pseudomonadota</taxon>
        <taxon>Gammaproteobacteria</taxon>
        <taxon>Vibrionales</taxon>
        <taxon>Vibrionaceae</taxon>
        <taxon>Photobacterium</taxon>
    </lineage>
</organism>
<reference key="1">
    <citation type="journal article" date="2005" name="Science">
        <title>Life at depth: Photobacterium profundum genome sequence and expression analysis.</title>
        <authorList>
            <person name="Vezzi A."/>
            <person name="Campanaro S."/>
            <person name="D'Angelo M."/>
            <person name="Simonato F."/>
            <person name="Vitulo N."/>
            <person name="Lauro F.M."/>
            <person name="Cestaro A."/>
            <person name="Malacrida G."/>
            <person name="Simionati B."/>
            <person name="Cannata N."/>
            <person name="Romualdi C."/>
            <person name="Bartlett D.H."/>
            <person name="Valle G."/>
        </authorList>
    </citation>
    <scope>NUCLEOTIDE SEQUENCE [LARGE SCALE GENOMIC DNA]</scope>
    <source>
        <strain>ATCC BAA-1253 / SS9</strain>
    </source>
</reference>
<keyword id="KW-1185">Reference proteome</keyword>
<keyword id="KW-0687">Ribonucleoprotein</keyword>
<keyword id="KW-0689">Ribosomal protein</keyword>
<keyword id="KW-0694">RNA-binding</keyword>
<keyword id="KW-0699">rRNA-binding</keyword>
<comment type="function">
    <text evidence="1">Binds to the 23S rRNA.</text>
</comment>
<comment type="similarity">
    <text evidence="1">Belongs to the bacterial ribosomal protein bL9 family.</text>
</comment>
<dbReference type="EMBL" id="CR378673">
    <property type="protein sequence ID" value="CAG21634.1"/>
    <property type="molecule type" value="Genomic_DNA"/>
</dbReference>
<dbReference type="RefSeq" id="WP_011219882.1">
    <property type="nucleotide sequence ID" value="NC_006370.1"/>
</dbReference>
<dbReference type="SMR" id="Q6LM44"/>
<dbReference type="STRING" id="298386.PBPRA3336"/>
<dbReference type="KEGG" id="ppr:PBPRA3336"/>
<dbReference type="eggNOG" id="COG0359">
    <property type="taxonomic scope" value="Bacteria"/>
</dbReference>
<dbReference type="HOGENOM" id="CLU_078938_4_1_6"/>
<dbReference type="Proteomes" id="UP000000593">
    <property type="component" value="Chromosome 1"/>
</dbReference>
<dbReference type="GO" id="GO:1990904">
    <property type="term" value="C:ribonucleoprotein complex"/>
    <property type="evidence" value="ECO:0007669"/>
    <property type="project" value="UniProtKB-KW"/>
</dbReference>
<dbReference type="GO" id="GO:0005840">
    <property type="term" value="C:ribosome"/>
    <property type="evidence" value="ECO:0007669"/>
    <property type="project" value="UniProtKB-KW"/>
</dbReference>
<dbReference type="GO" id="GO:0019843">
    <property type="term" value="F:rRNA binding"/>
    <property type="evidence" value="ECO:0007669"/>
    <property type="project" value="UniProtKB-UniRule"/>
</dbReference>
<dbReference type="GO" id="GO:0003735">
    <property type="term" value="F:structural constituent of ribosome"/>
    <property type="evidence" value="ECO:0007669"/>
    <property type="project" value="InterPro"/>
</dbReference>
<dbReference type="GO" id="GO:0006412">
    <property type="term" value="P:translation"/>
    <property type="evidence" value="ECO:0007669"/>
    <property type="project" value="UniProtKB-UniRule"/>
</dbReference>
<dbReference type="FunFam" id="3.10.430.100:FF:000001">
    <property type="entry name" value="50S ribosomal protein L9"/>
    <property type="match status" value="1"/>
</dbReference>
<dbReference type="FunFam" id="3.40.5.10:FF:000001">
    <property type="entry name" value="50S ribosomal protein L9"/>
    <property type="match status" value="1"/>
</dbReference>
<dbReference type="Gene3D" id="3.10.430.100">
    <property type="entry name" value="Ribosomal protein L9, C-terminal domain"/>
    <property type="match status" value="1"/>
</dbReference>
<dbReference type="Gene3D" id="3.40.5.10">
    <property type="entry name" value="Ribosomal protein L9, N-terminal domain"/>
    <property type="match status" value="1"/>
</dbReference>
<dbReference type="HAMAP" id="MF_00503">
    <property type="entry name" value="Ribosomal_bL9"/>
    <property type="match status" value="1"/>
</dbReference>
<dbReference type="InterPro" id="IPR000244">
    <property type="entry name" value="Ribosomal_bL9"/>
</dbReference>
<dbReference type="InterPro" id="IPR009027">
    <property type="entry name" value="Ribosomal_bL9/RNase_H1_N"/>
</dbReference>
<dbReference type="InterPro" id="IPR020594">
    <property type="entry name" value="Ribosomal_bL9_bac/chp"/>
</dbReference>
<dbReference type="InterPro" id="IPR020069">
    <property type="entry name" value="Ribosomal_bL9_C"/>
</dbReference>
<dbReference type="InterPro" id="IPR036791">
    <property type="entry name" value="Ribosomal_bL9_C_sf"/>
</dbReference>
<dbReference type="InterPro" id="IPR020070">
    <property type="entry name" value="Ribosomal_bL9_N"/>
</dbReference>
<dbReference type="InterPro" id="IPR036935">
    <property type="entry name" value="Ribosomal_bL9_N_sf"/>
</dbReference>
<dbReference type="NCBIfam" id="TIGR00158">
    <property type="entry name" value="L9"/>
    <property type="match status" value="1"/>
</dbReference>
<dbReference type="PANTHER" id="PTHR21368">
    <property type="entry name" value="50S RIBOSOMAL PROTEIN L9"/>
    <property type="match status" value="1"/>
</dbReference>
<dbReference type="Pfam" id="PF03948">
    <property type="entry name" value="Ribosomal_L9_C"/>
    <property type="match status" value="1"/>
</dbReference>
<dbReference type="Pfam" id="PF01281">
    <property type="entry name" value="Ribosomal_L9_N"/>
    <property type="match status" value="1"/>
</dbReference>
<dbReference type="SUPFAM" id="SSF55658">
    <property type="entry name" value="L9 N-domain-like"/>
    <property type="match status" value="1"/>
</dbReference>
<dbReference type="SUPFAM" id="SSF55653">
    <property type="entry name" value="Ribosomal protein L9 C-domain"/>
    <property type="match status" value="1"/>
</dbReference>
<accession>Q6LM44</accession>
<feature type="chain" id="PRO_0000236561" description="Large ribosomal subunit protein bL9">
    <location>
        <begin position="1"/>
        <end position="150"/>
    </location>
</feature>
<proteinExistence type="inferred from homology"/>
<evidence type="ECO:0000255" key="1">
    <source>
        <dbReference type="HAMAP-Rule" id="MF_00503"/>
    </source>
</evidence>
<evidence type="ECO:0000305" key="2"/>
<name>RL9_PHOPR</name>
<sequence>MQVILLDKIGNLGSLGDQVNVKSGYARNFLIPQGKVVMATKANVEMFETRRAELEAKVAEQRAASEARAEKLSALDAVVIASKAGDEGKLFGSIGTRDIADAITAAGEAVVKSEVRLPEGALRNIGEYEVSIQLNSDVFAKVNLTIVAAE</sequence>